<protein>
    <recommendedName>
        <fullName evidence="1">Peptide deformylase</fullName>
        <shortName evidence="1">PDF</shortName>
        <ecNumber evidence="1">3.5.1.88</ecNumber>
    </recommendedName>
    <alternativeName>
        <fullName evidence="1">Polypeptide deformylase</fullName>
    </alternativeName>
</protein>
<gene>
    <name evidence="1" type="primary">def</name>
    <name type="ordered locus">LEPBI_I1573</name>
</gene>
<feature type="chain" id="PRO_1000097322" description="Peptide deformylase">
    <location>
        <begin position="1"/>
        <end position="179"/>
    </location>
</feature>
<feature type="active site" evidence="1">
    <location>
        <position position="146"/>
    </location>
</feature>
<feature type="binding site" evidence="1">
    <location>
        <position position="103"/>
    </location>
    <ligand>
        <name>Fe cation</name>
        <dbReference type="ChEBI" id="CHEBI:24875"/>
    </ligand>
</feature>
<feature type="binding site" evidence="1">
    <location>
        <position position="145"/>
    </location>
    <ligand>
        <name>Fe cation</name>
        <dbReference type="ChEBI" id="CHEBI:24875"/>
    </ligand>
</feature>
<feature type="binding site" evidence="1">
    <location>
        <position position="149"/>
    </location>
    <ligand>
        <name>Fe cation</name>
        <dbReference type="ChEBI" id="CHEBI:24875"/>
    </ligand>
</feature>
<organism>
    <name type="scientific">Leptospira biflexa serovar Patoc (strain Patoc 1 / ATCC 23582 / Paris)</name>
    <dbReference type="NCBI Taxonomy" id="456481"/>
    <lineage>
        <taxon>Bacteria</taxon>
        <taxon>Pseudomonadati</taxon>
        <taxon>Spirochaetota</taxon>
        <taxon>Spirochaetia</taxon>
        <taxon>Leptospirales</taxon>
        <taxon>Leptospiraceae</taxon>
        <taxon>Leptospira</taxon>
    </lineage>
</organism>
<name>DEF_LEPBP</name>
<sequence>MAVRKILKIGNPILRQTSEDVSESEIQTKDFKKLIRDMFETMRHADGVGLAAPQIGVLKKLVVVGQEDDNERYPGTPEVPNQIILNPEITPLSPPRDGFWEGCLSVPGMRGYVERPNKIRMKWRDENYVEHDEIIEGYRAIVLQHECDHLFGVLYVDRLKSTKLFGYNEDIDTAGKLLD</sequence>
<accession>B0SQM2</accession>
<proteinExistence type="inferred from homology"/>
<keyword id="KW-0378">Hydrolase</keyword>
<keyword id="KW-0408">Iron</keyword>
<keyword id="KW-0479">Metal-binding</keyword>
<keyword id="KW-0648">Protein biosynthesis</keyword>
<keyword id="KW-1185">Reference proteome</keyword>
<evidence type="ECO:0000255" key="1">
    <source>
        <dbReference type="HAMAP-Rule" id="MF_00163"/>
    </source>
</evidence>
<reference key="1">
    <citation type="journal article" date="2008" name="PLoS ONE">
        <title>Genome sequence of the saprophyte Leptospira biflexa provides insights into the evolution of Leptospira and the pathogenesis of leptospirosis.</title>
        <authorList>
            <person name="Picardeau M."/>
            <person name="Bulach D.M."/>
            <person name="Bouchier C."/>
            <person name="Zuerner R.L."/>
            <person name="Zidane N."/>
            <person name="Wilson P.J."/>
            <person name="Creno S."/>
            <person name="Kuczek E.S."/>
            <person name="Bommezzadri S."/>
            <person name="Davis J.C."/>
            <person name="McGrath A."/>
            <person name="Johnson M.J."/>
            <person name="Boursaux-Eude C."/>
            <person name="Seemann T."/>
            <person name="Rouy Z."/>
            <person name="Coppel R.L."/>
            <person name="Rood J.I."/>
            <person name="Lajus A."/>
            <person name="Davies J.K."/>
            <person name="Medigue C."/>
            <person name="Adler B."/>
        </authorList>
    </citation>
    <scope>NUCLEOTIDE SEQUENCE [LARGE SCALE GENOMIC DNA]</scope>
    <source>
        <strain>Patoc 1 / ATCC 23582 / Paris</strain>
    </source>
</reference>
<comment type="function">
    <text evidence="1">Removes the formyl group from the N-terminal Met of newly synthesized proteins. Requires at least a dipeptide for an efficient rate of reaction. N-terminal L-methionine is a prerequisite for activity but the enzyme has broad specificity at other positions.</text>
</comment>
<comment type="catalytic activity">
    <reaction evidence="1">
        <text>N-terminal N-formyl-L-methionyl-[peptide] + H2O = N-terminal L-methionyl-[peptide] + formate</text>
        <dbReference type="Rhea" id="RHEA:24420"/>
        <dbReference type="Rhea" id="RHEA-COMP:10639"/>
        <dbReference type="Rhea" id="RHEA-COMP:10640"/>
        <dbReference type="ChEBI" id="CHEBI:15377"/>
        <dbReference type="ChEBI" id="CHEBI:15740"/>
        <dbReference type="ChEBI" id="CHEBI:49298"/>
        <dbReference type="ChEBI" id="CHEBI:64731"/>
        <dbReference type="EC" id="3.5.1.88"/>
    </reaction>
</comment>
<comment type="cofactor">
    <cofactor evidence="1">
        <name>Fe(2+)</name>
        <dbReference type="ChEBI" id="CHEBI:29033"/>
    </cofactor>
    <text evidence="1">Binds 1 Fe(2+) ion.</text>
</comment>
<comment type="similarity">
    <text evidence="1">Belongs to the polypeptide deformylase family.</text>
</comment>
<dbReference type="EC" id="3.5.1.88" evidence="1"/>
<dbReference type="EMBL" id="CP000786">
    <property type="protein sequence ID" value="ABZ97680.1"/>
    <property type="molecule type" value="Genomic_DNA"/>
</dbReference>
<dbReference type="RefSeq" id="WP_012388559.1">
    <property type="nucleotide sequence ID" value="NC_010602.1"/>
</dbReference>
<dbReference type="SMR" id="B0SQM2"/>
<dbReference type="STRING" id="456481.LEPBI_I1573"/>
<dbReference type="KEGG" id="lbi:LEPBI_I1573"/>
<dbReference type="HOGENOM" id="CLU_061901_5_2_12"/>
<dbReference type="OrthoDB" id="9784988at2"/>
<dbReference type="BioCyc" id="LBIF456481:LEPBI_RS07755-MONOMER"/>
<dbReference type="Proteomes" id="UP000001847">
    <property type="component" value="Chromosome I"/>
</dbReference>
<dbReference type="GO" id="GO:0046872">
    <property type="term" value="F:metal ion binding"/>
    <property type="evidence" value="ECO:0007669"/>
    <property type="project" value="UniProtKB-KW"/>
</dbReference>
<dbReference type="GO" id="GO:0042586">
    <property type="term" value="F:peptide deformylase activity"/>
    <property type="evidence" value="ECO:0007669"/>
    <property type="project" value="UniProtKB-UniRule"/>
</dbReference>
<dbReference type="GO" id="GO:0043686">
    <property type="term" value="P:co-translational protein modification"/>
    <property type="evidence" value="ECO:0007669"/>
    <property type="project" value="TreeGrafter"/>
</dbReference>
<dbReference type="GO" id="GO:0006412">
    <property type="term" value="P:translation"/>
    <property type="evidence" value="ECO:0007669"/>
    <property type="project" value="UniProtKB-UniRule"/>
</dbReference>
<dbReference type="CDD" id="cd00487">
    <property type="entry name" value="Pep_deformylase"/>
    <property type="match status" value="1"/>
</dbReference>
<dbReference type="FunFam" id="3.90.45.10:FF:000003">
    <property type="entry name" value="Peptide deformylase"/>
    <property type="match status" value="1"/>
</dbReference>
<dbReference type="Gene3D" id="3.90.45.10">
    <property type="entry name" value="Peptide deformylase"/>
    <property type="match status" value="1"/>
</dbReference>
<dbReference type="HAMAP" id="MF_00163">
    <property type="entry name" value="Pep_deformylase"/>
    <property type="match status" value="1"/>
</dbReference>
<dbReference type="InterPro" id="IPR023635">
    <property type="entry name" value="Peptide_deformylase"/>
</dbReference>
<dbReference type="InterPro" id="IPR036821">
    <property type="entry name" value="Peptide_deformylase_sf"/>
</dbReference>
<dbReference type="NCBIfam" id="TIGR00079">
    <property type="entry name" value="pept_deformyl"/>
    <property type="match status" value="1"/>
</dbReference>
<dbReference type="NCBIfam" id="NF001159">
    <property type="entry name" value="PRK00150.1-3"/>
    <property type="match status" value="1"/>
</dbReference>
<dbReference type="PANTHER" id="PTHR10458">
    <property type="entry name" value="PEPTIDE DEFORMYLASE"/>
    <property type="match status" value="1"/>
</dbReference>
<dbReference type="PANTHER" id="PTHR10458:SF20">
    <property type="entry name" value="PEPTIDE DEFORMYLASE 1"/>
    <property type="match status" value="1"/>
</dbReference>
<dbReference type="Pfam" id="PF01327">
    <property type="entry name" value="Pep_deformylase"/>
    <property type="match status" value="1"/>
</dbReference>
<dbReference type="PIRSF" id="PIRSF004749">
    <property type="entry name" value="Pep_def"/>
    <property type="match status" value="1"/>
</dbReference>
<dbReference type="PRINTS" id="PR01576">
    <property type="entry name" value="PDEFORMYLASE"/>
</dbReference>
<dbReference type="SUPFAM" id="SSF56420">
    <property type="entry name" value="Peptide deformylase"/>
    <property type="match status" value="1"/>
</dbReference>